<protein>
    <recommendedName>
        <fullName>Outer membrane usher protein AfaC</fullName>
    </recommendedName>
</protein>
<gene>
    <name type="primary">afaC</name>
</gene>
<geneLocation type="plasmid">
    <name>pIL1055</name>
</geneLocation>
<comment type="function">
    <text>Involved in the export and assembly of AFA-III afimbrial adhesin subunits across the outer membrane.</text>
</comment>
<comment type="subcellular location">
    <subcellularLocation>
        <location evidence="1">Cell outer membrane</location>
        <topology evidence="1">Multi-pass membrane protein</topology>
    </subcellularLocation>
</comment>
<comment type="similarity">
    <text evidence="3">Belongs to the fimbrial export usher family.</text>
</comment>
<comment type="caution">
    <text evidence="3">It is uncertain whether Met-1 or Met-9 is the initiator.</text>
</comment>
<name>AFAC_ECOLX</name>
<evidence type="ECO:0000250" key="1"/>
<evidence type="ECO:0000255" key="2"/>
<evidence type="ECO:0000305" key="3"/>
<feature type="signal peptide" evidence="2">
    <location>
        <begin position="1"/>
        <end position="28"/>
    </location>
</feature>
<feature type="chain" id="PRO_0000009298" description="Outer membrane usher protein AfaC">
    <location>
        <begin position="29"/>
        <end position="859"/>
    </location>
</feature>
<keyword id="KW-0998">Cell outer membrane</keyword>
<keyword id="KW-0472">Membrane</keyword>
<keyword id="KW-0614">Plasmid</keyword>
<keyword id="KW-0732">Signal</keyword>
<keyword id="KW-0812">Transmembrane</keyword>
<keyword id="KW-1134">Transmembrane beta strand</keyword>
<keyword id="KW-0813">Transport</keyword>
<organism>
    <name type="scientific">Escherichia coli</name>
    <dbReference type="NCBI Taxonomy" id="562"/>
    <lineage>
        <taxon>Bacteria</taxon>
        <taxon>Pseudomonadati</taxon>
        <taxon>Pseudomonadota</taxon>
        <taxon>Gammaproteobacteria</taxon>
        <taxon>Enterobacterales</taxon>
        <taxon>Enterobacteriaceae</taxon>
        <taxon>Escherichia</taxon>
    </lineage>
</organism>
<accession>P53517</accession>
<reference key="1">
    <citation type="journal article" date="1994" name="J. Bacteriol.">
        <title>Nucleotide sequence of the afimbrial-adhesin-encoding afa-3 gene cluster and its translocation via flanking IS1 insertion sequences.</title>
        <authorList>
            <person name="Garcia M.-I."/>
            <person name="Labigne A."/>
            <person name="le Bouguenec C.L."/>
        </authorList>
    </citation>
    <scope>NUCLEOTIDE SEQUENCE [GENOMIC DNA]</scope>
    <source>
        <strain>A30 / UPEC</strain>
    </source>
</reference>
<proteinExistence type="inferred from homology"/>
<sequence>MRDTSSGRMRTGVTGLALAVMVACVMFRAESGIARTYSFDAAMLKGGGKGVDLTLFEEGGQLPGIYPVDIILNGSRVDSQEMAFHAERDAEGRPYLKTCLTREMLARYGVRIEEYPALFRASGEGRGASVAEEACADLTAIPQATESYQFAAQQLVLGIPQVAPSAAEGDWPEALWDDGIPAFLLNWQANAGRSEYRGYGKRVTDSYWVSLQPGINIGPWRVRNLTTWNRSSGQSGKWESSYIRAERGLNGIKSRLTLGEDYTPSDIFDSVPFRGAMMSSDESMVPYNLREFAPVVRGIARTQARIEVRQNGYLIQSQTVAPGAFALTDLPVTGSGSDLQVTVLESDGTAQVFTVPFTTPAIALREGYLKYNVTAGQYRSSDDAVEHTSLGQVTAMYGLPWGLTVYGGLQGADDYQSAALGLGWSLGRLGAVSLDTTHSRGQQKGHDYETGDTWRIRYNKSFELTGTSFTAASYQYSSDGYHTLPDVLDTWRDDRYAYRHTENRSRRTTLSLSQSLGQWGYVGLNGSRDEYRDRPHRDYFGASYSTSWNNISLSVNWSRNRNSGGYYGGWSRTEDSVSMWMSVPLGRWFGGADNDISTTAQMQRSTGQDTRYEAGLNGRAFDRRLYWDVREQMVPGSESHADTSRLNLTWYGTYGELTGMYSYSSTMRQLNAGMSGSMVAHSEGVTFGQRTGDTVALIAAPGVSGASVGGWPGVRTDFRGYTLAGYASPYQENVLTLDPTTFPEDAEVPQTDSRVVPTKGAVVRAGFRTRVGGRALVSLARQDGTPLPFGAVVTVEGERGQAAGSAGVVGDRGEVYLSGLKESGKLKAQWGENSLCHADYRLPEEKGPAGIFLTRTVCM</sequence>
<dbReference type="EMBL" id="X76688">
    <property type="protein sequence ID" value="CAA54117.1"/>
    <property type="molecule type" value="Genomic_DNA"/>
</dbReference>
<dbReference type="PIR" id="F55545">
    <property type="entry name" value="F55545"/>
</dbReference>
<dbReference type="SMR" id="P53517"/>
<dbReference type="GO" id="GO:0009279">
    <property type="term" value="C:cell outer membrane"/>
    <property type="evidence" value="ECO:0007669"/>
    <property type="project" value="UniProtKB-SubCell"/>
</dbReference>
<dbReference type="GO" id="GO:0015473">
    <property type="term" value="F:fimbrial usher porin activity"/>
    <property type="evidence" value="ECO:0007669"/>
    <property type="project" value="InterPro"/>
</dbReference>
<dbReference type="GO" id="GO:0009297">
    <property type="term" value="P:pilus assembly"/>
    <property type="evidence" value="ECO:0007669"/>
    <property type="project" value="InterPro"/>
</dbReference>
<dbReference type="FunFam" id="2.60.40.2610:FF:000001">
    <property type="entry name" value="Outer membrane fimbrial usher protein"/>
    <property type="match status" value="1"/>
</dbReference>
<dbReference type="FunFam" id="2.60.40.3110:FF:000001">
    <property type="entry name" value="Putative fimbrial outer membrane usher"/>
    <property type="match status" value="1"/>
</dbReference>
<dbReference type="Gene3D" id="2.60.40.2070">
    <property type="match status" value="1"/>
</dbReference>
<dbReference type="Gene3D" id="2.60.40.3110">
    <property type="match status" value="1"/>
</dbReference>
<dbReference type="Gene3D" id="3.10.20.410">
    <property type="match status" value="1"/>
</dbReference>
<dbReference type="Gene3D" id="2.60.40.2610">
    <property type="entry name" value="Outer membrane usher protein FimD, plug domain"/>
    <property type="match status" value="1"/>
</dbReference>
<dbReference type="InterPro" id="IPR000015">
    <property type="entry name" value="Fimb_usher"/>
</dbReference>
<dbReference type="InterPro" id="IPR018030">
    <property type="entry name" value="Fimbrial_membr_usher_CS"/>
</dbReference>
<dbReference type="InterPro" id="IPR042186">
    <property type="entry name" value="FimD_plug_dom"/>
</dbReference>
<dbReference type="InterPro" id="IPR025949">
    <property type="entry name" value="PapC-like_C"/>
</dbReference>
<dbReference type="InterPro" id="IPR043142">
    <property type="entry name" value="PapC-like_C_sf"/>
</dbReference>
<dbReference type="InterPro" id="IPR025885">
    <property type="entry name" value="PapC_N"/>
</dbReference>
<dbReference type="InterPro" id="IPR037224">
    <property type="entry name" value="PapC_N_sf"/>
</dbReference>
<dbReference type="PANTHER" id="PTHR30451:SF9">
    <property type="entry name" value="F1 CAPSULE-ANCHORING PROTEIN"/>
    <property type="match status" value="1"/>
</dbReference>
<dbReference type="PANTHER" id="PTHR30451">
    <property type="entry name" value="OUTER MEMBRANE USHER PROTEIN"/>
    <property type="match status" value="1"/>
</dbReference>
<dbReference type="Pfam" id="PF13953">
    <property type="entry name" value="PapC_C"/>
    <property type="match status" value="1"/>
</dbReference>
<dbReference type="Pfam" id="PF13954">
    <property type="entry name" value="PapC_N"/>
    <property type="match status" value="1"/>
</dbReference>
<dbReference type="Pfam" id="PF00577">
    <property type="entry name" value="Usher"/>
    <property type="match status" value="1"/>
</dbReference>
<dbReference type="SUPFAM" id="SSF141729">
    <property type="entry name" value="FimD N-terminal domain-like"/>
    <property type="match status" value="1"/>
</dbReference>
<dbReference type="PROSITE" id="PS01151">
    <property type="entry name" value="FIMBRIAL_USHER"/>
    <property type="match status" value="1"/>
</dbReference>